<accession>Q04X52</accession>
<reference key="1">
    <citation type="journal article" date="2006" name="Proc. Natl. Acad. Sci. U.S.A.">
        <title>Genome reduction in Leptospira borgpetersenii reflects limited transmission potential.</title>
        <authorList>
            <person name="Bulach D.M."/>
            <person name="Zuerner R.L."/>
            <person name="Wilson P."/>
            <person name="Seemann T."/>
            <person name="McGrath A."/>
            <person name="Cullen P.A."/>
            <person name="Davis J."/>
            <person name="Johnson M."/>
            <person name="Kuczek E."/>
            <person name="Alt D.P."/>
            <person name="Peterson-Burch B."/>
            <person name="Coppel R.L."/>
            <person name="Rood J.I."/>
            <person name="Davies J.K."/>
            <person name="Adler B."/>
        </authorList>
    </citation>
    <scope>NUCLEOTIDE SEQUENCE [LARGE SCALE GENOMIC DNA]</scope>
    <source>
        <strain>L550</strain>
    </source>
</reference>
<evidence type="ECO:0000255" key="1">
    <source>
        <dbReference type="HAMAP-Rule" id="MF_00375"/>
    </source>
</evidence>
<organism>
    <name type="scientific">Leptospira borgpetersenii serovar Hardjo-bovis (strain L550)</name>
    <dbReference type="NCBI Taxonomy" id="355276"/>
    <lineage>
        <taxon>Bacteria</taxon>
        <taxon>Pseudomonadati</taxon>
        <taxon>Spirochaetota</taxon>
        <taxon>Spirochaetia</taxon>
        <taxon>Leptospirales</taxon>
        <taxon>Leptospiraceae</taxon>
        <taxon>Leptospira</taxon>
    </lineage>
</organism>
<name>GSA_LEPBL</name>
<sequence length="441" mass="48001">MSQRSSELISDSWKGSSSEELFERAKIVSPGGVHSPVRSFRSVGGTPVFFVSANGATLTDVSGKEYVDFCLSFGPLILGHRDPEVEEVVRETAGLAWSFGTAEPYSLELAEFITNRIPWAEKVRFVNSGTEAVMSALRVTRAATGREKIFKFDGCYHGHLDALLVKAGSGLAGESSSDSAGISSTAIANTLVLPLDDEMAVQKLFESEGKNIAALIIEPLPANYGLLVQRKEFLLKIVEIAKKYGTLVVFDEVISGFRTGFQGMSGLLGIRPDLVTYGKIIGGGFPVGCYAGRRDLLDLVAPSGPVYQAGTLSANPFGMRAGLATLKKAERDSIYSVLEVRTKTFADEMVKLLNGKTDQEWEAVTHSSLFWFRKKTQQAVRRIDQIPEGHKEGFAEVFHVLLKNGIYLAPSGYEVGFLSWAHNDSVIAKVLEIADKAFKEL</sequence>
<protein>
    <recommendedName>
        <fullName evidence="1">Glutamate-1-semialdehyde 2,1-aminomutase</fullName>
        <shortName evidence="1">GSA</shortName>
        <ecNumber evidence="1">5.4.3.8</ecNumber>
    </recommendedName>
    <alternativeName>
        <fullName evidence="1">Glutamate-1-semialdehyde aminotransferase</fullName>
        <shortName evidence="1">GSA-AT</shortName>
    </alternativeName>
</protein>
<keyword id="KW-0963">Cytoplasm</keyword>
<keyword id="KW-0413">Isomerase</keyword>
<keyword id="KW-0627">Porphyrin biosynthesis</keyword>
<keyword id="KW-0663">Pyridoxal phosphate</keyword>
<proteinExistence type="inferred from homology"/>
<comment type="catalytic activity">
    <reaction evidence="1">
        <text>(S)-4-amino-5-oxopentanoate = 5-aminolevulinate</text>
        <dbReference type="Rhea" id="RHEA:14265"/>
        <dbReference type="ChEBI" id="CHEBI:57501"/>
        <dbReference type="ChEBI" id="CHEBI:356416"/>
        <dbReference type="EC" id="5.4.3.8"/>
    </reaction>
</comment>
<comment type="cofactor">
    <cofactor evidence="1">
        <name>pyridoxal 5'-phosphate</name>
        <dbReference type="ChEBI" id="CHEBI:597326"/>
    </cofactor>
</comment>
<comment type="pathway">
    <text evidence="1">Porphyrin-containing compound metabolism; protoporphyrin-IX biosynthesis; 5-aminolevulinate from L-glutamyl-tRNA(Glu): step 2/2.</text>
</comment>
<comment type="subunit">
    <text evidence="1">Homodimer.</text>
</comment>
<comment type="subcellular location">
    <subcellularLocation>
        <location evidence="1">Cytoplasm</location>
    </subcellularLocation>
</comment>
<comment type="similarity">
    <text evidence="1">Belongs to the class-III pyridoxal-phosphate-dependent aminotransferase family. HemL subfamily.</text>
</comment>
<feature type="chain" id="PRO_0000382329" description="Glutamate-1-semialdehyde 2,1-aminomutase">
    <location>
        <begin position="1"/>
        <end position="441"/>
    </location>
</feature>
<feature type="modified residue" description="N6-(pyridoxal phosphate)lysine" evidence="1">
    <location>
        <position position="279"/>
    </location>
</feature>
<gene>
    <name evidence="1" type="primary">hemL</name>
    <name type="ordered locus">LBL_4011</name>
</gene>
<dbReference type="EC" id="5.4.3.8" evidence="1"/>
<dbReference type="EMBL" id="CP000349">
    <property type="protein sequence ID" value="ABJ80354.1"/>
    <property type="molecule type" value="Genomic_DNA"/>
</dbReference>
<dbReference type="RefSeq" id="WP_011671243.1">
    <property type="nucleotide sequence ID" value="NC_008509.1"/>
</dbReference>
<dbReference type="SMR" id="Q04X52"/>
<dbReference type="KEGG" id="lbl:LBL_4011"/>
<dbReference type="HOGENOM" id="CLU_016922_1_5_12"/>
<dbReference type="UniPathway" id="UPA00251">
    <property type="reaction ID" value="UER00317"/>
</dbReference>
<dbReference type="GO" id="GO:0005737">
    <property type="term" value="C:cytoplasm"/>
    <property type="evidence" value="ECO:0007669"/>
    <property type="project" value="UniProtKB-SubCell"/>
</dbReference>
<dbReference type="GO" id="GO:0042286">
    <property type="term" value="F:glutamate-1-semialdehyde 2,1-aminomutase activity"/>
    <property type="evidence" value="ECO:0007669"/>
    <property type="project" value="UniProtKB-UniRule"/>
</dbReference>
<dbReference type="GO" id="GO:0030170">
    <property type="term" value="F:pyridoxal phosphate binding"/>
    <property type="evidence" value="ECO:0007669"/>
    <property type="project" value="InterPro"/>
</dbReference>
<dbReference type="GO" id="GO:0008483">
    <property type="term" value="F:transaminase activity"/>
    <property type="evidence" value="ECO:0007669"/>
    <property type="project" value="InterPro"/>
</dbReference>
<dbReference type="GO" id="GO:0006782">
    <property type="term" value="P:protoporphyrinogen IX biosynthetic process"/>
    <property type="evidence" value="ECO:0007669"/>
    <property type="project" value="UniProtKB-UniRule"/>
</dbReference>
<dbReference type="CDD" id="cd00610">
    <property type="entry name" value="OAT_like"/>
    <property type="match status" value="1"/>
</dbReference>
<dbReference type="FunFam" id="3.40.640.10:FF:000021">
    <property type="entry name" value="Glutamate-1-semialdehyde 2,1-aminomutase"/>
    <property type="match status" value="1"/>
</dbReference>
<dbReference type="Gene3D" id="3.90.1150.10">
    <property type="entry name" value="Aspartate Aminotransferase, domain 1"/>
    <property type="match status" value="1"/>
</dbReference>
<dbReference type="Gene3D" id="3.40.640.10">
    <property type="entry name" value="Type I PLP-dependent aspartate aminotransferase-like (Major domain)"/>
    <property type="match status" value="1"/>
</dbReference>
<dbReference type="HAMAP" id="MF_00375">
    <property type="entry name" value="HemL_aminotrans_3"/>
    <property type="match status" value="1"/>
</dbReference>
<dbReference type="InterPro" id="IPR004639">
    <property type="entry name" value="4pyrrol_synth_GluAld_NH2Trfase"/>
</dbReference>
<dbReference type="InterPro" id="IPR005814">
    <property type="entry name" value="Aminotrans_3"/>
</dbReference>
<dbReference type="InterPro" id="IPR049704">
    <property type="entry name" value="Aminotrans_3_PPA_site"/>
</dbReference>
<dbReference type="InterPro" id="IPR015424">
    <property type="entry name" value="PyrdxlP-dep_Trfase"/>
</dbReference>
<dbReference type="InterPro" id="IPR015421">
    <property type="entry name" value="PyrdxlP-dep_Trfase_major"/>
</dbReference>
<dbReference type="InterPro" id="IPR015422">
    <property type="entry name" value="PyrdxlP-dep_Trfase_small"/>
</dbReference>
<dbReference type="NCBIfam" id="NF000818">
    <property type="entry name" value="PRK00062.1"/>
    <property type="match status" value="1"/>
</dbReference>
<dbReference type="PANTHER" id="PTHR43713">
    <property type="entry name" value="GLUTAMATE-1-SEMIALDEHYDE 2,1-AMINOMUTASE"/>
    <property type="match status" value="1"/>
</dbReference>
<dbReference type="PANTHER" id="PTHR43713:SF3">
    <property type="entry name" value="GLUTAMATE-1-SEMIALDEHYDE 2,1-AMINOMUTASE 1, CHLOROPLASTIC-RELATED"/>
    <property type="match status" value="1"/>
</dbReference>
<dbReference type="Pfam" id="PF00202">
    <property type="entry name" value="Aminotran_3"/>
    <property type="match status" value="1"/>
</dbReference>
<dbReference type="SUPFAM" id="SSF53383">
    <property type="entry name" value="PLP-dependent transferases"/>
    <property type="match status" value="1"/>
</dbReference>
<dbReference type="PROSITE" id="PS00600">
    <property type="entry name" value="AA_TRANSFER_CLASS_3"/>
    <property type="match status" value="1"/>
</dbReference>